<sequence>MIQMQSTLDVACNSGARRVQCIKVLGGSHRRYAGIGDIIKVSVKEAIPRAKAKKGDVYNAVVVRTKKGVRRPDGSVIRFDRNAAVLLNNNLQPIGTRIFGPVTRELRNEQFMKIVSLAPEVL</sequence>
<name>RL14_SHESR</name>
<keyword id="KW-0687">Ribonucleoprotein</keyword>
<keyword id="KW-0689">Ribosomal protein</keyword>
<keyword id="KW-0694">RNA-binding</keyword>
<keyword id="KW-0699">rRNA-binding</keyword>
<proteinExistence type="inferred from homology"/>
<accession>Q0I095</accession>
<evidence type="ECO:0000255" key="1">
    <source>
        <dbReference type="HAMAP-Rule" id="MF_01367"/>
    </source>
</evidence>
<evidence type="ECO:0000305" key="2"/>
<reference key="1">
    <citation type="submission" date="2006-08" db="EMBL/GenBank/DDBJ databases">
        <title>Complete sequence of chromosome 1 of Shewanella sp. MR-7.</title>
        <authorList>
            <person name="Copeland A."/>
            <person name="Lucas S."/>
            <person name="Lapidus A."/>
            <person name="Barry K."/>
            <person name="Detter J.C."/>
            <person name="Glavina del Rio T."/>
            <person name="Hammon N."/>
            <person name="Israni S."/>
            <person name="Dalin E."/>
            <person name="Tice H."/>
            <person name="Pitluck S."/>
            <person name="Kiss H."/>
            <person name="Brettin T."/>
            <person name="Bruce D."/>
            <person name="Han C."/>
            <person name="Tapia R."/>
            <person name="Gilna P."/>
            <person name="Schmutz J."/>
            <person name="Larimer F."/>
            <person name="Land M."/>
            <person name="Hauser L."/>
            <person name="Kyrpides N."/>
            <person name="Mikhailova N."/>
            <person name="Nealson K."/>
            <person name="Konstantinidis K."/>
            <person name="Klappenbach J."/>
            <person name="Tiedje J."/>
            <person name="Richardson P."/>
        </authorList>
    </citation>
    <scope>NUCLEOTIDE SEQUENCE [LARGE SCALE GENOMIC DNA]</scope>
    <source>
        <strain>MR-7</strain>
    </source>
</reference>
<gene>
    <name evidence="1" type="primary">rplN</name>
    <name type="ordered locus">Shewmr7_0204</name>
</gene>
<organism>
    <name type="scientific">Shewanella sp. (strain MR-7)</name>
    <dbReference type="NCBI Taxonomy" id="60481"/>
    <lineage>
        <taxon>Bacteria</taxon>
        <taxon>Pseudomonadati</taxon>
        <taxon>Pseudomonadota</taxon>
        <taxon>Gammaproteobacteria</taxon>
        <taxon>Alteromonadales</taxon>
        <taxon>Shewanellaceae</taxon>
        <taxon>Shewanella</taxon>
    </lineage>
</organism>
<comment type="function">
    <text evidence="1">Binds to 23S rRNA. Forms part of two intersubunit bridges in the 70S ribosome.</text>
</comment>
<comment type="subunit">
    <text evidence="1">Part of the 50S ribosomal subunit. Forms a cluster with proteins L3 and L19. In the 70S ribosome, L14 and L19 interact and together make contacts with the 16S rRNA in bridges B5 and B8.</text>
</comment>
<comment type="similarity">
    <text evidence="1">Belongs to the universal ribosomal protein uL14 family.</text>
</comment>
<protein>
    <recommendedName>
        <fullName evidence="1">Large ribosomal subunit protein uL14</fullName>
    </recommendedName>
    <alternativeName>
        <fullName evidence="2">50S ribosomal protein L14</fullName>
    </alternativeName>
</protein>
<dbReference type="EMBL" id="CP000444">
    <property type="protein sequence ID" value="ABI41210.1"/>
    <property type="molecule type" value="Genomic_DNA"/>
</dbReference>
<dbReference type="SMR" id="Q0I095"/>
<dbReference type="KEGG" id="shm:Shewmr7_0204"/>
<dbReference type="HOGENOM" id="CLU_095071_2_1_6"/>
<dbReference type="GO" id="GO:0022625">
    <property type="term" value="C:cytosolic large ribosomal subunit"/>
    <property type="evidence" value="ECO:0007669"/>
    <property type="project" value="TreeGrafter"/>
</dbReference>
<dbReference type="GO" id="GO:0070180">
    <property type="term" value="F:large ribosomal subunit rRNA binding"/>
    <property type="evidence" value="ECO:0007669"/>
    <property type="project" value="TreeGrafter"/>
</dbReference>
<dbReference type="GO" id="GO:0003735">
    <property type="term" value="F:structural constituent of ribosome"/>
    <property type="evidence" value="ECO:0007669"/>
    <property type="project" value="InterPro"/>
</dbReference>
<dbReference type="GO" id="GO:0006412">
    <property type="term" value="P:translation"/>
    <property type="evidence" value="ECO:0007669"/>
    <property type="project" value="UniProtKB-UniRule"/>
</dbReference>
<dbReference type="CDD" id="cd00337">
    <property type="entry name" value="Ribosomal_uL14"/>
    <property type="match status" value="1"/>
</dbReference>
<dbReference type="FunFam" id="2.40.150.20:FF:000001">
    <property type="entry name" value="50S ribosomal protein L14"/>
    <property type="match status" value="1"/>
</dbReference>
<dbReference type="Gene3D" id="2.40.150.20">
    <property type="entry name" value="Ribosomal protein L14"/>
    <property type="match status" value="1"/>
</dbReference>
<dbReference type="HAMAP" id="MF_01367">
    <property type="entry name" value="Ribosomal_uL14"/>
    <property type="match status" value="1"/>
</dbReference>
<dbReference type="InterPro" id="IPR000218">
    <property type="entry name" value="Ribosomal_uL14"/>
</dbReference>
<dbReference type="InterPro" id="IPR005745">
    <property type="entry name" value="Ribosomal_uL14_bac-type"/>
</dbReference>
<dbReference type="InterPro" id="IPR019972">
    <property type="entry name" value="Ribosomal_uL14_CS"/>
</dbReference>
<dbReference type="InterPro" id="IPR036853">
    <property type="entry name" value="Ribosomal_uL14_sf"/>
</dbReference>
<dbReference type="NCBIfam" id="TIGR01067">
    <property type="entry name" value="rplN_bact"/>
    <property type="match status" value="1"/>
</dbReference>
<dbReference type="PANTHER" id="PTHR11761">
    <property type="entry name" value="50S/60S RIBOSOMAL PROTEIN L14/L23"/>
    <property type="match status" value="1"/>
</dbReference>
<dbReference type="PANTHER" id="PTHR11761:SF3">
    <property type="entry name" value="LARGE RIBOSOMAL SUBUNIT PROTEIN UL14M"/>
    <property type="match status" value="1"/>
</dbReference>
<dbReference type="Pfam" id="PF00238">
    <property type="entry name" value="Ribosomal_L14"/>
    <property type="match status" value="1"/>
</dbReference>
<dbReference type="SMART" id="SM01374">
    <property type="entry name" value="Ribosomal_L14"/>
    <property type="match status" value="1"/>
</dbReference>
<dbReference type="SUPFAM" id="SSF50193">
    <property type="entry name" value="Ribosomal protein L14"/>
    <property type="match status" value="1"/>
</dbReference>
<dbReference type="PROSITE" id="PS00049">
    <property type="entry name" value="RIBOSOMAL_L14"/>
    <property type="match status" value="1"/>
</dbReference>
<feature type="chain" id="PRO_0000266559" description="Large ribosomal subunit protein uL14">
    <location>
        <begin position="1"/>
        <end position="122"/>
    </location>
</feature>